<sequence length="322" mass="35892">MDNFLALTLTGKKPVITEREINGVRWRWLGDGVLELTPLTPPQGALVISAGIHGNETAPVEMLDALLGAISHGEIPLRWRLLVILGNPPALKQGKRYCHSDMNRMFGGRWQLFAESGETCRARELEQCLEDFYDQSKESVRWHFDLHTAIRGSLHPQFGVLPQRDIPWDEKFLTWLGAAGLEALVFHQEPGGTFTHFSVRHFGALACTLELGKALPFGQNDLRQFAVTASAIAALLSGESVGIVRTPPLRYRVVSQITRHSPSFEMHMASDTLNFMPFEKGTLLAQDGEERFTVTHDVEYVLFPNPLVALGLRAGLMLEKIS</sequence>
<comment type="function">
    <text evidence="1">Transforms N(2)-succinylglutamate into succinate and glutamate.</text>
</comment>
<comment type="catalytic activity">
    <reaction evidence="1">
        <text>N-succinyl-L-glutamate + H2O = L-glutamate + succinate</text>
        <dbReference type="Rhea" id="RHEA:15169"/>
        <dbReference type="ChEBI" id="CHEBI:15377"/>
        <dbReference type="ChEBI" id="CHEBI:29985"/>
        <dbReference type="ChEBI" id="CHEBI:30031"/>
        <dbReference type="ChEBI" id="CHEBI:58763"/>
        <dbReference type="EC" id="3.5.1.96"/>
    </reaction>
</comment>
<comment type="cofactor">
    <cofactor evidence="1">
        <name>Zn(2+)</name>
        <dbReference type="ChEBI" id="CHEBI:29105"/>
    </cofactor>
    <text evidence="1">Binds 1 zinc ion per subunit.</text>
</comment>
<comment type="pathway">
    <text evidence="1">Amino-acid degradation; L-arginine degradation via AST pathway; L-glutamate and succinate from L-arginine: step 5/5.</text>
</comment>
<comment type="similarity">
    <text evidence="1">Belongs to the AspA/AstE family. Succinylglutamate desuccinylase subfamily.</text>
</comment>
<accession>Q0T4V2</accession>
<keyword id="KW-0056">Arginine metabolism</keyword>
<keyword id="KW-0378">Hydrolase</keyword>
<keyword id="KW-0479">Metal-binding</keyword>
<keyword id="KW-0862">Zinc</keyword>
<gene>
    <name evidence="1" type="primary">astE</name>
    <name type="ordered locus">SFV_1476</name>
</gene>
<evidence type="ECO:0000255" key="1">
    <source>
        <dbReference type="HAMAP-Rule" id="MF_00767"/>
    </source>
</evidence>
<name>ASTE_SHIF8</name>
<proteinExistence type="inferred from homology"/>
<organism>
    <name type="scientific">Shigella flexneri serotype 5b (strain 8401)</name>
    <dbReference type="NCBI Taxonomy" id="373384"/>
    <lineage>
        <taxon>Bacteria</taxon>
        <taxon>Pseudomonadati</taxon>
        <taxon>Pseudomonadota</taxon>
        <taxon>Gammaproteobacteria</taxon>
        <taxon>Enterobacterales</taxon>
        <taxon>Enterobacteriaceae</taxon>
        <taxon>Shigella</taxon>
    </lineage>
</organism>
<dbReference type="EC" id="3.5.1.96" evidence="1"/>
<dbReference type="EMBL" id="CP000266">
    <property type="protein sequence ID" value="ABF03663.1"/>
    <property type="molecule type" value="Genomic_DNA"/>
</dbReference>
<dbReference type="RefSeq" id="WP_000368516.1">
    <property type="nucleotide sequence ID" value="NC_008258.1"/>
</dbReference>
<dbReference type="SMR" id="Q0T4V2"/>
<dbReference type="KEGG" id="sfv:SFV_1476"/>
<dbReference type="HOGENOM" id="CLU_071608_0_0_6"/>
<dbReference type="UniPathway" id="UPA00185">
    <property type="reaction ID" value="UER00283"/>
</dbReference>
<dbReference type="Proteomes" id="UP000000659">
    <property type="component" value="Chromosome"/>
</dbReference>
<dbReference type="GO" id="GO:0016788">
    <property type="term" value="F:hydrolase activity, acting on ester bonds"/>
    <property type="evidence" value="ECO:0007669"/>
    <property type="project" value="UniProtKB-UniRule"/>
</dbReference>
<dbReference type="GO" id="GO:0009017">
    <property type="term" value="F:succinylglutamate desuccinylase activity"/>
    <property type="evidence" value="ECO:0007669"/>
    <property type="project" value="UniProtKB-EC"/>
</dbReference>
<dbReference type="GO" id="GO:0008270">
    <property type="term" value="F:zinc ion binding"/>
    <property type="evidence" value="ECO:0007669"/>
    <property type="project" value="UniProtKB-UniRule"/>
</dbReference>
<dbReference type="GO" id="GO:0019544">
    <property type="term" value="P:arginine catabolic process to glutamate"/>
    <property type="evidence" value="ECO:0007669"/>
    <property type="project" value="UniProtKB-UniRule"/>
</dbReference>
<dbReference type="GO" id="GO:0019545">
    <property type="term" value="P:arginine catabolic process to succinate"/>
    <property type="evidence" value="ECO:0007669"/>
    <property type="project" value="UniProtKB-UniRule"/>
</dbReference>
<dbReference type="CDD" id="cd03855">
    <property type="entry name" value="M14_ASTE"/>
    <property type="match status" value="1"/>
</dbReference>
<dbReference type="FunFam" id="3.40.630.10:FF:000017">
    <property type="entry name" value="Succinylglutamate desuccinylase"/>
    <property type="match status" value="1"/>
</dbReference>
<dbReference type="Gene3D" id="3.40.630.10">
    <property type="entry name" value="Zn peptidases"/>
    <property type="match status" value="1"/>
</dbReference>
<dbReference type="HAMAP" id="MF_00767">
    <property type="entry name" value="Arg_catab_AstE"/>
    <property type="match status" value="1"/>
</dbReference>
<dbReference type="InterPro" id="IPR050178">
    <property type="entry name" value="AspA/AstE_fam"/>
</dbReference>
<dbReference type="InterPro" id="IPR055438">
    <property type="entry name" value="AstE_AspA_cat"/>
</dbReference>
<dbReference type="InterPro" id="IPR007036">
    <property type="entry name" value="Aste_AspA_hybrid_dom"/>
</dbReference>
<dbReference type="InterPro" id="IPR016681">
    <property type="entry name" value="SuccinylGlu_desuccinylase"/>
</dbReference>
<dbReference type="NCBIfam" id="TIGR03242">
    <property type="entry name" value="arg_catab_astE"/>
    <property type="match status" value="1"/>
</dbReference>
<dbReference type="NCBIfam" id="NF003706">
    <property type="entry name" value="PRK05324.1"/>
    <property type="match status" value="1"/>
</dbReference>
<dbReference type="PANTHER" id="PTHR15162">
    <property type="entry name" value="ASPARTOACYLASE"/>
    <property type="match status" value="1"/>
</dbReference>
<dbReference type="PANTHER" id="PTHR15162:SF7">
    <property type="entry name" value="SUCCINYLGLUTAMATE DESUCCINYLASE"/>
    <property type="match status" value="1"/>
</dbReference>
<dbReference type="Pfam" id="PF24827">
    <property type="entry name" value="AstE_AspA_cat"/>
    <property type="match status" value="1"/>
</dbReference>
<dbReference type="Pfam" id="PF04952">
    <property type="entry name" value="AstE_AspA_hybrid"/>
    <property type="match status" value="1"/>
</dbReference>
<dbReference type="PIRSF" id="PIRSF017020">
    <property type="entry name" value="AstE"/>
    <property type="match status" value="1"/>
</dbReference>
<dbReference type="SUPFAM" id="SSF53187">
    <property type="entry name" value="Zn-dependent exopeptidases"/>
    <property type="match status" value="1"/>
</dbReference>
<feature type="chain" id="PRO_1000017332" description="Succinylglutamate desuccinylase">
    <location>
        <begin position="1"/>
        <end position="322"/>
    </location>
</feature>
<feature type="active site" evidence="1">
    <location>
        <position position="210"/>
    </location>
</feature>
<feature type="binding site" evidence="1">
    <location>
        <position position="53"/>
    </location>
    <ligand>
        <name>Zn(2+)</name>
        <dbReference type="ChEBI" id="CHEBI:29105"/>
    </ligand>
</feature>
<feature type="binding site" evidence="1">
    <location>
        <position position="56"/>
    </location>
    <ligand>
        <name>Zn(2+)</name>
        <dbReference type="ChEBI" id="CHEBI:29105"/>
    </ligand>
</feature>
<feature type="binding site" evidence="1">
    <location>
        <position position="147"/>
    </location>
    <ligand>
        <name>Zn(2+)</name>
        <dbReference type="ChEBI" id="CHEBI:29105"/>
    </ligand>
</feature>
<reference key="1">
    <citation type="journal article" date="2006" name="BMC Genomics">
        <title>Complete genome sequence of Shigella flexneri 5b and comparison with Shigella flexneri 2a.</title>
        <authorList>
            <person name="Nie H."/>
            <person name="Yang F."/>
            <person name="Zhang X."/>
            <person name="Yang J."/>
            <person name="Chen L."/>
            <person name="Wang J."/>
            <person name="Xiong Z."/>
            <person name="Peng J."/>
            <person name="Sun L."/>
            <person name="Dong J."/>
            <person name="Xue Y."/>
            <person name="Xu X."/>
            <person name="Chen S."/>
            <person name="Yao Z."/>
            <person name="Shen Y."/>
            <person name="Jin Q."/>
        </authorList>
    </citation>
    <scope>NUCLEOTIDE SEQUENCE [LARGE SCALE GENOMIC DNA]</scope>
    <source>
        <strain>8401</strain>
    </source>
</reference>
<protein>
    <recommendedName>
        <fullName evidence="1">Succinylglutamate desuccinylase</fullName>
        <ecNumber evidence="1">3.5.1.96</ecNumber>
    </recommendedName>
</protein>